<name>PHS_SHEB8</name>
<organism>
    <name type="scientific">Shewanella baltica (strain OS185)</name>
    <dbReference type="NCBI Taxonomy" id="402882"/>
    <lineage>
        <taxon>Bacteria</taxon>
        <taxon>Pseudomonadati</taxon>
        <taxon>Pseudomonadota</taxon>
        <taxon>Gammaproteobacteria</taxon>
        <taxon>Alteromonadales</taxon>
        <taxon>Shewanellaceae</taxon>
        <taxon>Shewanella</taxon>
    </lineage>
</organism>
<keyword id="KW-0456">Lyase</keyword>
<feature type="chain" id="PRO_1000050454" description="Putative pterin-4-alpha-carbinolamine dehydratase">
    <location>
        <begin position="1"/>
        <end position="112"/>
    </location>
</feature>
<protein>
    <recommendedName>
        <fullName evidence="1">Putative pterin-4-alpha-carbinolamine dehydratase</fullName>
        <shortName evidence="1">PHS</shortName>
        <ecNumber evidence="1">4.2.1.96</ecNumber>
    </recommendedName>
    <alternativeName>
        <fullName evidence="1">4-alpha-hydroxy-tetrahydropterin dehydratase</fullName>
    </alternativeName>
    <alternativeName>
        <fullName evidence="1">Pterin carbinolamine dehydratase</fullName>
        <shortName evidence="1">PCD</shortName>
    </alternativeName>
</protein>
<accession>A6WLE1</accession>
<evidence type="ECO:0000255" key="1">
    <source>
        <dbReference type="HAMAP-Rule" id="MF_00434"/>
    </source>
</evidence>
<proteinExistence type="inferred from homology"/>
<gene>
    <name type="ordered locus">Shew185_1480</name>
</gene>
<comment type="catalytic activity">
    <reaction evidence="1">
        <text>(4aS,6R)-4a-hydroxy-L-erythro-5,6,7,8-tetrahydrobiopterin = (6R)-L-erythro-6,7-dihydrobiopterin + H2O</text>
        <dbReference type="Rhea" id="RHEA:11920"/>
        <dbReference type="ChEBI" id="CHEBI:15377"/>
        <dbReference type="ChEBI" id="CHEBI:15642"/>
        <dbReference type="ChEBI" id="CHEBI:43120"/>
        <dbReference type="EC" id="4.2.1.96"/>
    </reaction>
</comment>
<comment type="similarity">
    <text evidence="1">Belongs to the pterin-4-alpha-carbinolamine dehydratase family.</text>
</comment>
<reference key="1">
    <citation type="submission" date="2007-07" db="EMBL/GenBank/DDBJ databases">
        <title>Complete sequence of chromosome of Shewanella baltica OS185.</title>
        <authorList>
            <consortium name="US DOE Joint Genome Institute"/>
            <person name="Copeland A."/>
            <person name="Lucas S."/>
            <person name="Lapidus A."/>
            <person name="Barry K."/>
            <person name="Glavina del Rio T."/>
            <person name="Dalin E."/>
            <person name="Tice H."/>
            <person name="Pitluck S."/>
            <person name="Sims D."/>
            <person name="Brettin T."/>
            <person name="Bruce D."/>
            <person name="Detter J.C."/>
            <person name="Han C."/>
            <person name="Schmutz J."/>
            <person name="Larimer F."/>
            <person name="Land M."/>
            <person name="Hauser L."/>
            <person name="Kyrpides N."/>
            <person name="Mikhailova N."/>
            <person name="Brettar I."/>
            <person name="Rodrigues J."/>
            <person name="Konstantinidis K."/>
            <person name="Tiedje J."/>
            <person name="Richardson P."/>
        </authorList>
    </citation>
    <scope>NUCLEOTIDE SEQUENCE [LARGE SCALE GENOMIC DNA]</scope>
    <source>
        <strain>OS185</strain>
    </source>
</reference>
<sequence>MTALSNMKCEACQADAPKVTDEELAELIRMIPDWGVQVRDGVMQLERVYKFKNFKLAMAFTNKLADLAEEEFHHPGIFTEWGKVTVTWWSHSIKGLHKNDFIMAAKTDQLLV</sequence>
<dbReference type="EC" id="4.2.1.96" evidence="1"/>
<dbReference type="EMBL" id="CP000753">
    <property type="protein sequence ID" value="ABS07630.1"/>
    <property type="molecule type" value="Genomic_DNA"/>
</dbReference>
<dbReference type="RefSeq" id="WP_006081014.1">
    <property type="nucleotide sequence ID" value="NC_009665.1"/>
</dbReference>
<dbReference type="SMR" id="A6WLE1"/>
<dbReference type="KEGG" id="sbm:Shew185_1480"/>
<dbReference type="HOGENOM" id="CLU_081974_2_2_6"/>
<dbReference type="GO" id="GO:0008124">
    <property type="term" value="F:4-alpha-hydroxytetrahydrobiopterin dehydratase activity"/>
    <property type="evidence" value="ECO:0007669"/>
    <property type="project" value="UniProtKB-UniRule"/>
</dbReference>
<dbReference type="GO" id="GO:0006729">
    <property type="term" value="P:tetrahydrobiopterin biosynthetic process"/>
    <property type="evidence" value="ECO:0007669"/>
    <property type="project" value="InterPro"/>
</dbReference>
<dbReference type="CDD" id="cd00913">
    <property type="entry name" value="PCD_DCoH_subfamily_a"/>
    <property type="match status" value="1"/>
</dbReference>
<dbReference type="Gene3D" id="3.30.1360.20">
    <property type="entry name" value="Transcriptional coactivator/pterin dehydratase"/>
    <property type="match status" value="1"/>
</dbReference>
<dbReference type="HAMAP" id="MF_00434">
    <property type="entry name" value="Pterin_4_alpha"/>
    <property type="match status" value="1"/>
</dbReference>
<dbReference type="InterPro" id="IPR036428">
    <property type="entry name" value="PCD_sf"/>
</dbReference>
<dbReference type="InterPro" id="IPR050376">
    <property type="entry name" value="Pterin-4-alpha-carb_dehyd"/>
</dbReference>
<dbReference type="InterPro" id="IPR001533">
    <property type="entry name" value="Pterin_deHydtase"/>
</dbReference>
<dbReference type="NCBIfam" id="NF002016">
    <property type="entry name" value="PRK00823.1-1"/>
    <property type="match status" value="1"/>
</dbReference>
<dbReference type="PANTHER" id="PTHR42805">
    <property type="entry name" value="PTERIN-4-ALPHA-CARBINOLAMINE DEHYDRATASE-RELATED"/>
    <property type="match status" value="1"/>
</dbReference>
<dbReference type="PANTHER" id="PTHR42805:SF1">
    <property type="entry name" value="PTERIN-4-ALPHA-CARBINOLAMINE DEHYDRATASE-RELATED"/>
    <property type="match status" value="1"/>
</dbReference>
<dbReference type="Pfam" id="PF01329">
    <property type="entry name" value="Pterin_4a"/>
    <property type="match status" value="1"/>
</dbReference>
<dbReference type="SUPFAM" id="SSF55248">
    <property type="entry name" value="PCD-like"/>
    <property type="match status" value="1"/>
</dbReference>